<organism>
    <name type="scientific">Candida glabrata (strain ATCC 2001 / BCRC 20586 / JCM 3761 / NBRC 0622 / NRRL Y-65 / CBS 138)</name>
    <name type="common">Yeast</name>
    <name type="synonym">Nakaseomyces glabratus</name>
    <dbReference type="NCBI Taxonomy" id="284593"/>
    <lineage>
        <taxon>Eukaryota</taxon>
        <taxon>Fungi</taxon>
        <taxon>Dikarya</taxon>
        <taxon>Ascomycota</taxon>
        <taxon>Saccharomycotina</taxon>
        <taxon>Saccharomycetes</taxon>
        <taxon>Saccharomycetales</taxon>
        <taxon>Saccharomycetaceae</taxon>
        <taxon>Nakaseomyces</taxon>
    </lineage>
</organism>
<feature type="chain" id="PRO_0000057526" description="tRNA pseudouridine synthase 1">
    <location>
        <begin position="1"/>
        <end position="549"/>
    </location>
</feature>
<feature type="region of interest" description="Disordered" evidence="3">
    <location>
        <begin position="1"/>
        <end position="83"/>
    </location>
</feature>
<feature type="region of interest" description="Disordered" evidence="3">
    <location>
        <begin position="507"/>
        <end position="549"/>
    </location>
</feature>
<feature type="compositionally biased region" description="Low complexity" evidence="3">
    <location>
        <begin position="1"/>
        <end position="13"/>
    </location>
</feature>
<feature type="compositionally biased region" description="Basic and acidic residues" evidence="3">
    <location>
        <begin position="53"/>
        <end position="73"/>
    </location>
</feature>
<feature type="compositionally biased region" description="Basic and acidic residues" evidence="3">
    <location>
        <begin position="512"/>
        <end position="524"/>
    </location>
</feature>
<feature type="active site" description="Nucleophile" evidence="1">
    <location>
        <position position="146"/>
    </location>
</feature>
<name>PUS1_CANGA</name>
<evidence type="ECO:0000250" key="1">
    <source>
        <dbReference type="UniProtKB" id="P07649"/>
    </source>
</evidence>
<evidence type="ECO:0000250" key="2">
    <source>
        <dbReference type="UniProtKB" id="Q12211"/>
    </source>
</evidence>
<evidence type="ECO:0000256" key="3">
    <source>
        <dbReference type="SAM" id="MobiDB-lite"/>
    </source>
</evidence>
<evidence type="ECO:0000305" key="4"/>
<reference key="1">
    <citation type="journal article" date="2004" name="Nature">
        <title>Genome evolution in yeasts.</title>
        <authorList>
            <person name="Dujon B."/>
            <person name="Sherman D."/>
            <person name="Fischer G."/>
            <person name="Durrens P."/>
            <person name="Casaregola S."/>
            <person name="Lafontaine I."/>
            <person name="de Montigny J."/>
            <person name="Marck C."/>
            <person name="Neuveglise C."/>
            <person name="Talla E."/>
            <person name="Goffard N."/>
            <person name="Frangeul L."/>
            <person name="Aigle M."/>
            <person name="Anthouard V."/>
            <person name="Babour A."/>
            <person name="Barbe V."/>
            <person name="Barnay S."/>
            <person name="Blanchin S."/>
            <person name="Beckerich J.-M."/>
            <person name="Beyne E."/>
            <person name="Bleykasten C."/>
            <person name="Boisrame A."/>
            <person name="Boyer J."/>
            <person name="Cattolico L."/>
            <person name="Confanioleri F."/>
            <person name="de Daruvar A."/>
            <person name="Despons L."/>
            <person name="Fabre E."/>
            <person name="Fairhead C."/>
            <person name="Ferry-Dumazet H."/>
            <person name="Groppi A."/>
            <person name="Hantraye F."/>
            <person name="Hennequin C."/>
            <person name="Jauniaux N."/>
            <person name="Joyet P."/>
            <person name="Kachouri R."/>
            <person name="Kerrest A."/>
            <person name="Koszul R."/>
            <person name="Lemaire M."/>
            <person name="Lesur I."/>
            <person name="Ma L."/>
            <person name="Muller H."/>
            <person name="Nicaud J.-M."/>
            <person name="Nikolski M."/>
            <person name="Oztas S."/>
            <person name="Ozier-Kalogeropoulos O."/>
            <person name="Pellenz S."/>
            <person name="Potier S."/>
            <person name="Richard G.-F."/>
            <person name="Straub M.-L."/>
            <person name="Suleau A."/>
            <person name="Swennen D."/>
            <person name="Tekaia F."/>
            <person name="Wesolowski-Louvel M."/>
            <person name="Westhof E."/>
            <person name="Wirth B."/>
            <person name="Zeniou-Meyer M."/>
            <person name="Zivanovic Y."/>
            <person name="Bolotin-Fukuhara M."/>
            <person name="Thierry A."/>
            <person name="Bouchier C."/>
            <person name="Caudron B."/>
            <person name="Scarpelli C."/>
            <person name="Gaillardin C."/>
            <person name="Weissenbach J."/>
            <person name="Wincker P."/>
            <person name="Souciet J.-L."/>
        </authorList>
    </citation>
    <scope>NUCLEOTIDE SEQUENCE [LARGE SCALE GENOMIC DNA]</scope>
    <source>
        <strain>ATCC 2001 / BCRC 20586 / JCM 3761 / NBRC 0622 / NRRL Y-65 / CBS 138</strain>
    </source>
</reference>
<proteinExistence type="inferred from homology"/>
<keyword id="KW-0413">Isomerase</keyword>
<keyword id="KW-0479">Metal-binding</keyword>
<keyword id="KW-0507">mRNA processing</keyword>
<keyword id="KW-0539">Nucleus</keyword>
<keyword id="KW-1185">Reference proteome</keyword>
<keyword id="KW-0819">tRNA processing</keyword>
<keyword id="KW-0862">Zinc</keyword>
<protein>
    <recommendedName>
        <fullName>tRNA pseudouridine synthase 1</fullName>
        <ecNumber evidence="2">5.4.99.-</ecNumber>
    </recommendedName>
    <alternativeName>
        <fullName>tRNA pseudouridylate synthase 1</fullName>
    </alternativeName>
    <alternativeName>
        <fullName>tRNA-uridine isomerase 1</fullName>
    </alternativeName>
</protein>
<gene>
    <name type="primary">PUS1</name>
    <name type="ordered locus">CAGL0E05764g</name>
</gene>
<comment type="function">
    <text evidence="2">Formation of pseudouridine at positions 27 and 28 in the anticodon stem and loop of transfer RNAs; at positions 34 and 36 of intron-containing precursor tRNA(Ile) and at position 35 in the intron-containing tRNA(Tyr). Catalyzes pseudouridylation at position 44 in U2 snRNA. Also catalyzes pseudouridylation of mRNAs.</text>
</comment>
<comment type="catalytic activity">
    <reaction evidence="2">
        <text>a uridine in tRNA = a pseudouridine in tRNA</text>
        <dbReference type="Rhea" id="RHEA:54572"/>
        <dbReference type="Rhea" id="RHEA-COMP:13339"/>
        <dbReference type="Rhea" id="RHEA-COMP:13934"/>
        <dbReference type="ChEBI" id="CHEBI:65314"/>
        <dbReference type="ChEBI" id="CHEBI:65315"/>
    </reaction>
</comment>
<comment type="catalytic activity">
    <reaction evidence="2">
        <text>uridine in snRNA = pseudouridine in snRNA</text>
        <dbReference type="Rhea" id="RHEA:51124"/>
        <dbReference type="Rhea" id="RHEA-COMP:12891"/>
        <dbReference type="Rhea" id="RHEA-COMP:12892"/>
        <dbReference type="ChEBI" id="CHEBI:65314"/>
        <dbReference type="ChEBI" id="CHEBI:65315"/>
    </reaction>
</comment>
<comment type="catalytic activity">
    <reaction evidence="2">
        <text>a uridine in mRNA = a pseudouridine in mRNA</text>
        <dbReference type="Rhea" id="RHEA:56644"/>
        <dbReference type="Rhea" id="RHEA-COMP:14658"/>
        <dbReference type="Rhea" id="RHEA-COMP:14659"/>
        <dbReference type="ChEBI" id="CHEBI:65314"/>
        <dbReference type="ChEBI" id="CHEBI:65315"/>
    </reaction>
</comment>
<comment type="cofactor">
    <cofactor evidence="2">
        <name>Zn(2+)</name>
        <dbReference type="ChEBI" id="CHEBI:29105"/>
    </cofactor>
    <text evidence="2">Binds 1 zinc ion per subunit.</text>
</comment>
<comment type="subcellular location">
    <subcellularLocation>
        <location evidence="2">Nucleus</location>
    </subcellularLocation>
</comment>
<comment type="similarity">
    <text evidence="4">Belongs to the tRNA pseudouridine synthase TruA family.</text>
</comment>
<accession>Q6FV05</accession>
<sequence>MEEVAPEQVQEVQGNTEAHIDSTTASTAPTEALPSDKQSRKANEIDSMADGAPAEKKQKTDQRQIIREPKLDDNGNPIPREPRLPKRKVAVMIGYCGTGYHGMQYNPPNPTIEAALFKAFVDAGAISKANSNDLKKNNFMRAARTDKGVHAGGNLISLKMIIEDPEIMDKINANLPEGIRIWDIERVNKAFDCRKMCSSRWYEYLLPTYSLIGPKPGTILNNDIESSKTELPGVLDEDLESKEFWENFEAAAKKEFTPEEIAAIKDYSPPPREEFDDQEELYQKVKQWKLLENTHRRQYRISEMKLNKFRAAMNQYLGAHNFHNFTLGKEFKDPSAIRFMKEIKVSDPFVIGDAKAEWVSIKIHGQSFMLHQIRKMISMATLIARCGTPVERISQAFGPQKINIPKAPALGLLLEAPVFESYNKRLEKFGYKPIDFSKYQEKVDAFKMKHIYDKIYAEEVSDNVFNAFFSYIDSFNKVTGAQTEESAESNKPATKSIFEFLSAHGIPGIDYGKNEKEDSNKESSNDQVNKESAPATSKPAEAVEQTEKN</sequence>
<dbReference type="EC" id="5.4.99.-" evidence="2"/>
<dbReference type="EMBL" id="CR380951">
    <property type="protein sequence ID" value="CAG58858.1"/>
    <property type="molecule type" value="Genomic_DNA"/>
</dbReference>
<dbReference type="RefSeq" id="XP_445939.1">
    <property type="nucleotide sequence ID" value="XM_445939.1"/>
</dbReference>
<dbReference type="SMR" id="Q6FV05"/>
<dbReference type="FunCoup" id="Q6FV05">
    <property type="interactions" value="1080"/>
</dbReference>
<dbReference type="STRING" id="284593.Q6FV05"/>
<dbReference type="EnsemblFungi" id="CAGL0E05764g-T">
    <property type="protein sequence ID" value="CAGL0E05764g-T-p1"/>
    <property type="gene ID" value="CAGL0E05764g"/>
</dbReference>
<dbReference type="KEGG" id="cgr:2887466"/>
<dbReference type="CGD" id="CAL0128858">
    <property type="gene designation" value="CAGL0E05764g"/>
</dbReference>
<dbReference type="VEuPathDB" id="FungiDB:CAGL0E05764g"/>
<dbReference type="eggNOG" id="KOG2553">
    <property type="taxonomic scope" value="Eukaryota"/>
</dbReference>
<dbReference type="HOGENOM" id="CLU_021971_0_1_1"/>
<dbReference type="InParanoid" id="Q6FV05"/>
<dbReference type="OMA" id="NKAFDCR"/>
<dbReference type="Proteomes" id="UP000002428">
    <property type="component" value="Chromosome E"/>
</dbReference>
<dbReference type="GO" id="GO:0005634">
    <property type="term" value="C:nucleus"/>
    <property type="evidence" value="ECO:0007669"/>
    <property type="project" value="UniProtKB-SubCell"/>
</dbReference>
<dbReference type="GO" id="GO:0046872">
    <property type="term" value="F:metal ion binding"/>
    <property type="evidence" value="ECO:0007669"/>
    <property type="project" value="UniProtKB-KW"/>
</dbReference>
<dbReference type="GO" id="GO:0003723">
    <property type="term" value="F:RNA binding"/>
    <property type="evidence" value="ECO:0007669"/>
    <property type="project" value="InterPro"/>
</dbReference>
<dbReference type="GO" id="GO:0106032">
    <property type="term" value="F:snRNA pseudouridine synthase activity"/>
    <property type="evidence" value="ECO:0007669"/>
    <property type="project" value="RHEA"/>
</dbReference>
<dbReference type="GO" id="GO:0106029">
    <property type="term" value="F:tRNA pseudouridine synthase activity"/>
    <property type="evidence" value="ECO:0007669"/>
    <property type="project" value="RHEA"/>
</dbReference>
<dbReference type="GO" id="GO:0006397">
    <property type="term" value="P:mRNA processing"/>
    <property type="evidence" value="ECO:0007669"/>
    <property type="project" value="UniProtKB-KW"/>
</dbReference>
<dbReference type="GO" id="GO:1990481">
    <property type="term" value="P:mRNA pseudouridine synthesis"/>
    <property type="evidence" value="ECO:0007669"/>
    <property type="project" value="EnsemblFungi"/>
</dbReference>
<dbReference type="GO" id="GO:0031120">
    <property type="term" value="P:snRNA pseudouridine synthesis"/>
    <property type="evidence" value="ECO:0007669"/>
    <property type="project" value="EnsemblFungi"/>
</dbReference>
<dbReference type="GO" id="GO:0031119">
    <property type="term" value="P:tRNA pseudouridine synthesis"/>
    <property type="evidence" value="ECO:0007669"/>
    <property type="project" value="EnsemblFungi"/>
</dbReference>
<dbReference type="CDD" id="cd02568">
    <property type="entry name" value="PseudoU_synth_PUS1_PUS2"/>
    <property type="match status" value="1"/>
</dbReference>
<dbReference type="FunFam" id="3.30.70.580:FF:000002">
    <property type="entry name" value="tRNA pseudouridine synthase"/>
    <property type="match status" value="1"/>
</dbReference>
<dbReference type="FunFam" id="3.30.70.660:FF:000002">
    <property type="entry name" value="tRNA pseudouridine synthase"/>
    <property type="match status" value="1"/>
</dbReference>
<dbReference type="Gene3D" id="3.30.70.660">
    <property type="entry name" value="Pseudouridine synthase I, catalytic domain, C-terminal subdomain"/>
    <property type="match status" value="1"/>
</dbReference>
<dbReference type="Gene3D" id="3.30.70.580">
    <property type="entry name" value="Pseudouridine synthase I, catalytic domain, N-terminal subdomain"/>
    <property type="match status" value="1"/>
</dbReference>
<dbReference type="InterPro" id="IPR020103">
    <property type="entry name" value="PsdUridine_synth_cat_dom_sf"/>
</dbReference>
<dbReference type="InterPro" id="IPR001406">
    <property type="entry name" value="PsdUridine_synth_TruA"/>
</dbReference>
<dbReference type="InterPro" id="IPR020097">
    <property type="entry name" value="PsdUridine_synth_TruA_a/b_dom"/>
</dbReference>
<dbReference type="InterPro" id="IPR020095">
    <property type="entry name" value="PsdUridine_synth_TruA_C"/>
</dbReference>
<dbReference type="InterPro" id="IPR041708">
    <property type="entry name" value="PUS1/PUS2-like"/>
</dbReference>
<dbReference type="InterPro" id="IPR020094">
    <property type="entry name" value="TruA/RsuA/RluB/E/F_N"/>
</dbReference>
<dbReference type="NCBIfam" id="TIGR00071">
    <property type="entry name" value="hisT_truA"/>
    <property type="match status" value="1"/>
</dbReference>
<dbReference type="PANTHER" id="PTHR11142">
    <property type="entry name" value="PSEUDOURIDYLATE SYNTHASE"/>
    <property type="match status" value="1"/>
</dbReference>
<dbReference type="PANTHER" id="PTHR11142:SF4">
    <property type="entry name" value="PSEUDOURIDYLATE SYNTHASE 1 HOMOLOG"/>
    <property type="match status" value="1"/>
</dbReference>
<dbReference type="Pfam" id="PF01416">
    <property type="entry name" value="PseudoU_synth_1"/>
    <property type="match status" value="1"/>
</dbReference>
<dbReference type="SUPFAM" id="SSF55120">
    <property type="entry name" value="Pseudouridine synthase"/>
    <property type="match status" value="1"/>
</dbReference>